<name>ATPA_LEUMM</name>
<reference key="1">
    <citation type="journal article" date="2006" name="Proc. Natl. Acad. Sci. U.S.A.">
        <title>Comparative genomics of the lactic acid bacteria.</title>
        <authorList>
            <person name="Makarova K.S."/>
            <person name="Slesarev A."/>
            <person name="Wolf Y.I."/>
            <person name="Sorokin A."/>
            <person name="Mirkin B."/>
            <person name="Koonin E.V."/>
            <person name="Pavlov A."/>
            <person name="Pavlova N."/>
            <person name="Karamychev V."/>
            <person name="Polouchine N."/>
            <person name="Shakhova V."/>
            <person name="Grigoriev I."/>
            <person name="Lou Y."/>
            <person name="Rohksar D."/>
            <person name="Lucas S."/>
            <person name="Huang K."/>
            <person name="Goodstein D.M."/>
            <person name="Hawkins T."/>
            <person name="Plengvidhya V."/>
            <person name="Welker D."/>
            <person name="Hughes J."/>
            <person name="Goh Y."/>
            <person name="Benson A."/>
            <person name="Baldwin K."/>
            <person name="Lee J.-H."/>
            <person name="Diaz-Muniz I."/>
            <person name="Dosti B."/>
            <person name="Smeianov V."/>
            <person name="Wechter W."/>
            <person name="Barabote R."/>
            <person name="Lorca G."/>
            <person name="Altermann E."/>
            <person name="Barrangou R."/>
            <person name="Ganesan B."/>
            <person name="Xie Y."/>
            <person name="Rawsthorne H."/>
            <person name="Tamir D."/>
            <person name="Parker C."/>
            <person name="Breidt F."/>
            <person name="Broadbent J.R."/>
            <person name="Hutkins R."/>
            <person name="O'Sullivan D."/>
            <person name="Steele J."/>
            <person name="Unlu G."/>
            <person name="Saier M.H. Jr."/>
            <person name="Klaenhammer T."/>
            <person name="Richardson P."/>
            <person name="Kozyavkin S."/>
            <person name="Weimer B.C."/>
            <person name="Mills D.A."/>
        </authorList>
    </citation>
    <scope>NUCLEOTIDE SEQUENCE [LARGE SCALE GENOMIC DNA]</scope>
    <source>
        <strain>ATCC 8293 / DSM 20343 / BCRC 11652 / CCM 1803 / JCM 6124 / NCDO 523 / NBRC 100496 / NCIMB 8023 / NCTC 12954 / NRRL B-1118 / 37Y</strain>
    </source>
</reference>
<protein>
    <recommendedName>
        <fullName evidence="1">ATP synthase subunit alpha</fullName>
        <ecNumber evidence="1">7.1.2.2</ecNumber>
    </recommendedName>
    <alternativeName>
        <fullName evidence="1">ATP synthase F1 sector subunit alpha</fullName>
    </alternativeName>
    <alternativeName>
        <fullName evidence="1">F-ATPase subunit alpha</fullName>
    </alternativeName>
</protein>
<dbReference type="EC" id="7.1.2.2" evidence="1"/>
<dbReference type="EMBL" id="CP000414">
    <property type="protein sequence ID" value="ABJ62945.1"/>
    <property type="molecule type" value="Genomic_DNA"/>
</dbReference>
<dbReference type="RefSeq" id="WP_002815626.1">
    <property type="nucleotide sequence ID" value="NC_008531.1"/>
</dbReference>
<dbReference type="SMR" id="Q03V27"/>
<dbReference type="EnsemblBacteria" id="ABJ62945">
    <property type="protein sequence ID" value="ABJ62945"/>
    <property type="gene ID" value="LEUM_1871"/>
</dbReference>
<dbReference type="GeneID" id="29577613"/>
<dbReference type="KEGG" id="lme:LEUM_1871"/>
<dbReference type="eggNOG" id="COG0056">
    <property type="taxonomic scope" value="Bacteria"/>
</dbReference>
<dbReference type="HOGENOM" id="CLU_010091_2_1_9"/>
<dbReference type="Proteomes" id="UP000000362">
    <property type="component" value="Chromosome"/>
</dbReference>
<dbReference type="GO" id="GO:0005886">
    <property type="term" value="C:plasma membrane"/>
    <property type="evidence" value="ECO:0007669"/>
    <property type="project" value="UniProtKB-SubCell"/>
</dbReference>
<dbReference type="GO" id="GO:0045259">
    <property type="term" value="C:proton-transporting ATP synthase complex"/>
    <property type="evidence" value="ECO:0007669"/>
    <property type="project" value="UniProtKB-KW"/>
</dbReference>
<dbReference type="GO" id="GO:0043531">
    <property type="term" value="F:ADP binding"/>
    <property type="evidence" value="ECO:0007669"/>
    <property type="project" value="TreeGrafter"/>
</dbReference>
<dbReference type="GO" id="GO:0005524">
    <property type="term" value="F:ATP binding"/>
    <property type="evidence" value="ECO:0007669"/>
    <property type="project" value="UniProtKB-UniRule"/>
</dbReference>
<dbReference type="GO" id="GO:0046933">
    <property type="term" value="F:proton-transporting ATP synthase activity, rotational mechanism"/>
    <property type="evidence" value="ECO:0007669"/>
    <property type="project" value="UniProtKB-UniRule"/>
</dbReference>
<dbReference type="CDD" id="cd18113">
    <property type="entry name" value="ATP-synt_F1_alpha_C"/>
    <property type="match status" value="1"/>
</dbReference>
<dbReference type="CDD" id="cd18116">
    <property type="entry name" value="ATP-synt_F1_alpha_N"/>
    <property type="match status" value="1"/>
</dbReference>
<dbReference type="CDD" id="cd01132">
    <property type="entry name" value="F1-ATPase_alpha_CD"/>
    <property type="match status" value="1"/>
</dbReference>
<dbReference type="FunFam" id="1.20.150.20:FF:000001">
    <property type="entry name" value="ATP synthase subunit alpha"/>
    <property type="match status" value="1"/>
</dbReference>
<dbReference type="FunFam" id="2.40.30.20:FF:000001">
    <property type="entry name" value="ATP synthase subunit alpha"/>
    <property type="match status" value="1"/>
</dbReference>
<dbReference type="FunFam" id="3.40.50.300:FF:000002">
    <property type="entry name" value="ATP synthase subunit alpha"/>
    <property type="match status" value="1"/>
</dbReference>
<dbReference type="Gene3D" id="2.40.30.20">
    <property type="match status" value="1"/>
</dbReference>
<dbReference type="Gene3D" id="1.20.150.20">
    <property type="entry name" value="ATP synthase alpha/beta chain, C-terminal domain"/>
    <property type="match status" value="1"/>
</dbReference>
<dbReference type="Gene3D" id="3.40.50.300">
    <property type="entry name" value="P-loop containing nucleotide triphosphate hydrolases"/>
    <property type="match status" value="1"/>
</dbReference>
<dbReference type="HAMAP" id="MF_01346">
    <property type="entry name" value="ATP_synth_alpha_bact"/>
    <property type="match status" value="1"/>
</dbReference>
<dbReference type="InterPro" id="IPR023366">
    <property type="entry name" value="ATP_synth_asu-like_sf"/>
</dbReference>
<dbReference type="InterPro" id="IPR000793">
    <property type="entry name" value="ATP_synth_asu_C"/>
</dbReference>
<dbReference type="InterPro" id="IPR038376">
    <property type="entry name" value="ATP_synth_asu_C_sf"/>
</dbReference>
<dbReference type="InterPro" id="IPR033732">
    <property type="entry name" value="ATP_synth_F1_a_nt-bd_dom"/>
</dbReference>
<dbReference type="InterPro" id="IPR005294">
    <property type="entry name" value="ATP_synth_F1_asu"/>
</dbReference>
<dbReference type="InterPro" id="IPR020003">
    <property type="entry name" value="ATPase_a/bsu_AS"/>
</dbReference>
<dbReference type="InterPro" id="IPR004100">
    <property type="entry name" value="ATPase_F1/V1/A1_a/bsu_N"/>
</dbReference>
<dbReference type="InterPro" id="IPR036121">
    <property type="entry name" value="ATPase_F1/V1/A1_a/bsu_N_sf"/>
</dbReference>
<dbReference type="InterPro" id="IPR000194">
    <property type="entry name" value="ATPase_F1/V1/A1_a/bsu_nucl-bd"/>
</dbReference>
<dbReference type="InterPro" id="IPR027417">
    <property type="entry name" value="P-loop_NTPase"/>
</dbReference>
<dbReference type="NCBIfam" id="TIGR00962">
    <property type="entry name" value="atpA"/>
    <property type="match status" value="1"/>
</dbReference>
<dbReference type="NCBIfam" id="NF009884">
    <property type="entry name" value="PRK13343.1"/>
    <property type="match status" value="1"/>
</dbReference>
<dbReference type="PANTHER" id="PTHR48082">
    <property type="entry name" value="ATP SYNTHASE SUBUNIT ALPHA, MITOCHONDRIAL"/>
    <property type="match status" value="1"/>
</dbReference>
<dbReference type="PANTHER" id="PTHR48082:SF2">
    <property type="entry name" value="ATP SYNTHASE SUBUNIT ALPHA, MITOCHONDRIAL"/>
    <property type="match status" value="1"/>
</dbReference>
<dbReference type="Pfam" id="PF00006">
    <property type="entry name" value="ATP-synt_ab"/>
    <property type="match status" value="1"/>
</dbReference>
<dbReference type="Pfam" id="PF00306">
    <property type="entry name" value="ATP-synt_ab_C"/>
    <property type="match status" value="1"/>
</dbReference>
<dbReference type="Pfam" id="PF02874">
    <property type="entry name" value="ATP-synt_ab_N"/>
    <property type="match status" value="1"/>
</dbReference>
<dbReference type="PIRSF" id="PIRSF039088">
    <property type="entry name" value="F_ATPase_subunit_alpha"/>
    <property type="match status" value="1"/>
</dbReference>
<dbReference type="SUPFAM" id="SSF47917">
    <property type="entry name" value="C-terminal domain of alpha and beta subunits of F1 ATP synthase"/>
    <property type="match status" value="1"/>
</dbReference>
<dbReference type="SUPFAM" id="SSF50615">
    <property type="entry name" value="N-terminal domain of alpha and beta subunits of F1 ATP synthase"/>
    <property type="match status" value="1"/>
</dbReference>
<dbReference type="SUPFAM" id="SSF52540">
    <property type="entry name" value="P-loop containing nucleoside triphosphate hydrolases"/>
    <property type="match status" value="1"/>
</dbReference>
<dbReference type="PROSITE" id="PS00152">
    <property type="entry name" value="ATPASE_ALPHA_BETA"/>
    <property type="match status" value="1"/>
</dbReference>
<sequence length="505" mass="54500">MAIQAEEISALIKQQLEKFDTTLTVEEVGTVTYVGDGVARATGLANALAGELVEFANGTYGMAQNLESSEVGIIILGGFDDIREGDTVKRTGRIMEVPVGEQLIGRVVNALGQPIDGLGEIKTDKTRPVEVKAPGVMERKSVSEPLQTGIKAIDALVPIGRGQRELIIGDRKTGKTSLAIDTILNQKDQNMIVIYVAIGQKNSTVRAQVETLRQMGAMDYTIVVNAGPSEPAPMLYLAPYVGAAMGEEFMYNGKHVLIVYDDLSKQATAYRELSLILRRPPGREAYPGDVFYLHSRLLERAAKLSDELGGGSMTALPFIETQAGDVSAYIPTNVISITDGQVFLDADQFYAGVRPAIDAGTSVSRVGGDAQIKAMKKVAGTLRLDLASFRELESFAQFGSDLDSATQAKLARGRRTVEILKQPLNKPMPVQHQVVVLYALTHGYLDDVEVADIQRFQDELIAYVDANASELFKAIVETKNLPEEADLNAAIEAFKAGFAGSESAE</sequence>
<comment type="function">
    <text evidence="1">Produces ATP from ADP in the presence of a proton gradient across the membrane. The alpha chain is a regulatory subunit.</text>
</comment>
<comment type="catalytic activity">
    <reaction evidence="1">
        <text>ATP + H2O + 4 H(+)(in) = ADP + phosphate + 5 H(+)(out)</text>
        <dbReference type="Rhea" id="RHEA:57720"/>
        <dbReference type="ChEBI" id="CHEBI:15377"/>
        <dbReference type="ChEBI" id="CHEBI:15378"/>
        <dbReference type="ChEBI" id="CHEBI:30616"/>
        <dbReference type="ChEBI" id="CHEBI:43474"/>
        <dbReference type="ChEBI" id="CHEBI:456216"/>
        <dbReference type="EC" id="7.1.2.2"/>
    </reaction>
</comment>
<comment type="subunit">
    <text evidence="1">F-type ATPases have 2 components, CF(1) - the catalytic core - and CF(0) - the membrane proton channel. CF(1) has five subunits: alpha(3), beta(3), gamma(1), delta(1), epsilon(1). CF(0) has three main subunits: a(1), b(2) and c(9-12). The alpha and beta chains form an alternating ring which encloses part of the gamma chain. CF(1) is attached to CF(0) by a central stalk formed by the gamma and epsilon chains, while a peripheral stalk is formed by the delta and b chains.</text>
</comment>
<comment type="subcellular location">
    <subcellularLocation>
        <location evidence="1">Cell membrane</location>
        <topology evidence="1">Peripheral membrane protein</topology>
    </subcellularLocation>
</comment>
<comment type="similarity">
    <text evidence="1">Belongs to the ATPase alpha/beta chains family.</text>
</comment>
<keyword id="KW-0066">ATP synthesis</keyword>
<keyword id="KW-0067">ATP-binding</keyword>
<keyword id="KW-1003">Cell membrane</keyword>
<keyword id="KW-0139">CF(1)</keyword>
<keyword id="KW-0375">Hydrogen ion transport</keyword>
<keyword id="KW-0406">Ion transport</keyword>
<keyword id="KW-0472">Membrane</keyword>
<keyword id="KW-0547">Nucleotide-binding</keyword>
<keyword id="KW-1185">Reference proteome</keyword>
<keyword id="KW-1278">Translocase</keyword>
<keyword id="KW-0813">Transport</keyword>
<gene>
    <name evidence="1" type="primary">atpA</name>
    <name type="ordered locus">LEUM_1871</name>
</gene>
<organism>
    <name type="scientific">Leuconostoc mesenteroides subsp. mesenteroides (strain ATCC 8293 / DSM 20343 / BCRC 11652 / CCM 1803 / JCM 6124 / NCDO 523 / NBRC 100496 / NCIMB 8023 / NCTC 12954 / NRRL B-1118 / 37Y)</name>
    <dbReference type="NCBI Taxonomy" id="203120"/>
    <lineage>
        <taxon>Bacteria</taxon>
        <taxon>Bacillati</taxon>
        <taxon>Bacillota</taxon>
        <taxon>Bacilli</taxon>
        <taxon>Lactobacillales</taxon>
        <taxon>Lactobacillaceae</taxon>
        <taxon>Leuconostoc</taxon>
    </lineage>
</organism>
<feature type="chain" id="PRO_0000302662" description="ATP synthase subunit alpha">
    <location>
        <begin position="1"/>
        <end position="505"/>
    </location>
</feature>
<feature type="binding site" evidence="1">
    <location>
        <begin position="169"/>
        <end position="176"/>
    </location>
    <ligand>
        <name>ATP</name>
        <dbReference type="ChEBI" id="CHEBI:30616"/>
    </ligand>
</feature>
<feature type="site" description="Required for activity" evidence="1">
    <location>
        <position position="362"/>
    </location>
</feature>
<proteinExistence type="inferred from homology"/>
<evidence type="ECO:0000255" key="1">
    <source>
        <dbReference type="HAMAP-Rule" id="MF_01346"/>
    </source>
</evidence>
<accession>Q03V27</accession>